<proteinExistence type="inferred from homology"/>
<feature type="chain" id="PRO_1000215490" description="Phosphoglucosamine mutase">
    <location>
        <begin position="1"/>
        <end position="450"/>
    </location>
</feature>
<feature type="active site" description="Phosphoserine intermediate" evidence="1">
    <location>
        <position position="102"/>
    </location>
</feature>
<feature type="binding site" description="via phosphate group" evidence="1">
    <location>
        <position position="102"/>
    </location>
    <ligand>
        <name>Mg(2+)</name>
        <dbReference type="ChEBI" id="CHEBI:18420"/>
    </ligand>
</feature>
<feature type="binding site" evidence="1">
    <location>
        <position position="242"/>
    </location>
    <ligand>
        <name>Mg(2+)</name>
        <dbReference type="ChEBI" id="CHEBI:18420"/>
    </ligand>
</feature>
<feature type="binding site" evidence="1">
    <location>
        <position position="244"/>
    </location>
    <ligand>
        <name>Mg(2+)</name>
        <dbReference type="ChEBI" id="CHEBI:18420"/>
    </ligand>
</feature>
<feature type="binding site" evidence="1">
    <location>
        <position position="246"/>
    </location>
    <ligand>
        <name>Mg(2+)</name>
        <dbReference type="ChEBI" id="CHEBI:18420"/>
    </ligand>
</feature>
<feature type="modified residue" description="Phosphoserine" evidence="1">
    <location>
        <position position="102"/>
    </location>
</feature>
<comment type="function">
    <text evidence="1">Catalyzes the conversion of glucosamine-6-phosphate to glucosamine-1-phosphate.</text>
</comment>
<comment type="catalytic activity">
    <reaction evidence="1">
        <text>alpha-D-glucosamine 1-phosphate = D-glucosamine 6-phosphate</text>
        <dbReference type="Rhea" id="RHEA:23424"/>
        <dbReference type="ChEBI" id="CHEBI:58516"/>
        <dbReference type="ChEBI" id="CHEBI:58725"/>
        <dbReference type="EC" id="5.4.2.10"/>
    </reaction>
</comment>
<comment type="cofactor">
    <cofactor evidence="1">
        <name>Mg(2+)</name>
        <dbReference type="ChEBI" id="CHEBI:18420"/>
    </cofactor>
    <text evidence="1">Binds 1 Mg(2+) ion per subunit.</text>
</comment>
<comment type="PTM">
    <text evidence="1">Activated by phosphorylation.</text>
</comment>
<comment type="similarity">
    <text evidence="1">Belongs to the phosphohexose mutase family.</text>
</comment>
<name>GLMM_LACE2</name>
<accession>C4Z1Z8</accession>
<organism>
    <name type="scientific">Lachnospira eligens (strain ATCC 27750 / DSM 3376 / VPI C15-48 / C15-B4)</name>
    <name type="common">Eubacterium eligens</name>
    <dbReference type="NCBI Taxonomy" id="515620"/>
    <lineage>
        <taxon>Bacteria</taxon>
        <taxon>Bacillati</taxon>
        <taxon>Bacillota</taxon>
        <taxon>Clostridia</taxon>
        <taxon>Lachnospirales</taxon>
        <taxon>Lachnospiraceae</taxon>
        <taxon>Lachnospira</taxon>
    </lineage>
</organism>
<sequence length="450" mass="49226">MGKYFGTDGFRGEANVTLTVDHAFKVGRFLGWYYGKNHEDGKAKIVIGKDTRRSSYMFEYSLVAGLTASGANAYLLHVTTTPSVSYVARTEDFDCGIMISASHNPFYDNGIKLINAAGEKMKEDVIAEIEKYLDGELGEIPYATRENIGCTVDYTAGRNRYMGYLMSLAIYSFKGIRVGLDASNGSAWTLAKAVFDALGAKTYVINAAPDGTNINANCGSTHIEGLQDLVRREHLDVGFAFDGDADRCLCVDEKGEVITGDHILYIYGCYMKDRDKLVGNKVVTTVMSNFGLYKAFDAVGIEYEKTKVGDKYVYECMSENGYRIGGEQSGHIIFSKYATTGDGIITALKMMEVMLAKKKTLSELAAPLVIYPQVLKNIRVTDKTQAQDDADVKAAVEAVANALGTDGRILVRESGTEPVVRVMVEAGSTEECEKYVDQVIDVIKSKGYAV</sequence>
<keyword id="KW-0413">Isomerase</keyword>
<keyword id="KW-0460">Magnesium</keyword>
<keyword id="KW-0479">Metal-binding</keyword>
<keyword id="KW-0597">Phosphoprotein</keyword>
<keyword id="KW-1185">Reference proteome</keyword>
<dbReference type="EC" id="5.4.2.10" evidence="1"/>
<dbReference type="EMBL" id="CP001104">
    <property type="protein sequence ID" value="ACR71188.1"/>
    <property type="molecule type" value="Genomic_DNA"/>
</dbReference>
<dbReference type="RefSeq" id="WP_012738426.1">
    <property type="nucleotide sequence ID" value="NC_012778.1"/>
</dbReference>
<dbReference type="SMR" id="C4Z1Z8"/>
<dbReference type="STRING" id="515620.EUBELI_00152"/>
<dbReference type="GeneID" id="41354941"/>
<dbReference type="KEGG" id="eel:EUBELI_00152"/>
<dbReference type="eggNOG" id="COG1109">
    <property type="taxonomic scope" value="Bacteria"/>
</dbReference>
<dbReference type="HOGENOM" id="CLU_016950_7_0_9"/>
<dbReference type="Proteomes" id="UP000001476">
    <property type="component" value="Chromosome"/>
</dbReference>
<dbReference type="GO" id="GO:0005829">
    <property type="term" value="C:cytosol"/>
    <property type="evidence" value="ECO:0007669"/>
    <property type="project" value="TreeGrafter"/>
</dbReference>
<dbReference type="GO" id="GO:0000287">
    <property type="term" value="F:magnesium ion binding"/>
    <property type="evidence" value="ECO:0007669"/>
    <property type="project" value="UniProtKB-UniRule"/>
</dbReference>
<dbReference type="GO" id="GO:0008966">
    <property type="term" value="F:phosphoglucosamine mutase activity"/>
    <property type="evidence" value="ECO:0007669"/>
    <property type="project" value="UniProtKB-UniRule"/>
</dbReference>
<dbReference type="GO" id="GO:0004615">
    <property type="term" value="F:phosphomannomutase activity"/>
    <property type="evidence" value="ECO:0007669"/>
    <property type="project" value="TreeGrafter"/>
</dbReference>
<dbReference type="GO" id="GO:0005975">
    <property type="term" value="P:carbohydrate metabolic process"/>
    <property type="evidence" value="ECO:0007669"/>
    <property type="project" value="InterPro"/>
</dbReference>
<dbReference type="GO" id="GO:0009252">
    <property type="term" value="P:peptidoglycan biosynthetic process"/>
    <property type="evidence" value="ECO:0007669"/>
    <property type="project" value="TreeGrafter"/>
</dbReference>
<dbReference type="GO" id="GO:0006048">
    <property type="term" value="P:UDP-N-acetylglucosamine biosynthetic process"/>
    <property type="evidence" value="ECO:0007669"/>
    <property type="project" value="TreeGrafter"/>
</dbReference>
<dbReference type="CDD" id="cd05802">
    <property type="entry name" value="GlmM"/>
    <property type="match status" value="1"/>
</dbReference>
<dbReference type="FunFam" id="3.30.310.50:FF:000001">
    <property type="entry name" value="Phosphoglucosamine mutase"/>
    <property type="match status" value="1"/>
</dbReference>
<dbReference type="FunFam" id="3.40.120.10:FF:000001">
    <property type="entry name" value="Phosphoglucosamine mutase"/>
    <property type="match status" value="1"/>
</dbReference>
<dbReference type="FunFam" id="3.40.120.10:FF:000002">
    <property type="entry name" value="Phosphoglucosamine mutase"/>
    <property type="match status" value="1"/>
</dbReference>
<dbReference type="Gene3D" id="3.40.120.10">
    <property type="entry name" value="Alpha-D-Glucose-1,6-Bisphosphate, subunit A, domain 3"/>
    <property type="match status" value="3"/>
</dbReference>
<dbReference type="Gene3D" id="3.30.310.50">
    <property type="entry name" value="Alpha-D-phosphohexomutase, C-terminal domain"/>
    <property type="match status" value="1"/>
</dbReference>
<dbReference type="HAMAP" id="MF_01554_B">
    <property type="entry name" value="GlmM_B"/>
    <property type="match status" value="1"/>
</dbReference>
<dbReference type="InterPro" id="IPR005844">
    <property type="entry name" value="A-D-PHexomutase_a/b/a-I"/>
</dbReference>
<dbReference type="InterPro" id="IPR016055">
    <property type="entry name" value="A-D-PHexomutase_a/b/a-I/II/III"/>
</dbReference>
<dbReference type="InterPro" id="IPR005845">
    <property type="entry name" value="A-D-PHexomutase_a/b/a-II"/>
</dbReference>
<dbReference type="InterPro" id="IPR005846">
    <property type="entry name" value="A-D-PHexomutase_a/b/a-III"/>
</dbReference>
<dbReference type="InterPro" id="IPR005843">
    <property type="entry name" value="A-D-PHexomutase_C"/>
</dbReference>
<dbReference type="InterPro" id="IPR036900">
    <property type="entry name" value="A-D-PHexomutase_C_sf"/>
</dbReference>
<dbReference type="InterPro" id="IPR016066">
    <property type="entry name" value="A-D-PHexomutase_CS"/>
</dbReference>
<dbReference type="InterPro" id="IPR005841">
    <property type="entry name" value="Alpha-D-phosphohexomutase_SF"/>
</dbReference>
<dbReference type="InterPro" id="IPR006352">
    <property type="entry name" value="GlmM_bact"/>
</dbReference>
<dbReference type="InterPro" id="IPR050060">
    <property type="entry name" value="Phosphoglucosamine_mutase"/>
</dbReference>
<dbReference type="NCBIfam" id="TIGR01455">
    <property type="entry name" value="glmM"/>
    <property type="match status" value="1"/>
</dbReference>
<dbReference type="PANTHER" id="PTHR42946:SF1">
    <property type="entry name" value="PHOSPHOGLUCOMUTASE (ALPHA-D-GLUCOSE-1,6-BISPHOSPHATE-DEPENDENT)"/>
    <property type="match status" value="1"/>
</dbReference>
<dbReference type="PANTHER" id="PTHR42946">
    <property type="entry name" value="PHOSPHOHEXOSE MUTASE"/>
    <property type="match status" value="1"/>
</dbReference>
<dbReference type="Pfam" id="PF02878">
    <property type="entry name" value="PGM_PMM_I"/>
    <property type="match status" value="1"/>
</dbReference>
<dbReference type="Pfam" id="PF02879">
    <property type="entry name" value="PGM_PMM_II"/>
    <property type="match status" value="1"/>
</dbReference>
<dbReference type="Pfam" id="PF02880">
    <property type="entry name" value="PGM_PMM_III"/>
    <property type="match status" value="1"/>
</dbReference>
<dbReference type="Pfam" id="PF00408">
    <property type="entry name" value="PGM_PMM_IV"/>
    <property type="match status" value="1"/>
</dbReference>
<dbReference type="PRINTS" id="PR00509">
    <property type="entry name" value="PGMPMM"/>
</dbReference>
<dbReference type="SUPFAM" id="SSF55957">
    <property type="entry name" value="Phosphoglucomutase, C-terminal domain"/>
    <property type="match status" value="1"/>
</dbReference>
<dbReference type="SUPFAM" id="SSF53738">
    <property type="entry name" value="Phosphoglucomutase, first 3 domains"/>
    <property type="match status" value="3"/>
</dbReference>
<dbReference type="PROSITE" id="PS00710">
    <property type="entry name" value="PGM_PMM"/>
    <property type="match status" value="1"/>
</dbReference>
<protein>
    <recommendedName>
        <fullName evidence="1">Phosphoglucosamine mutase</fullName>
        <ecNumber evidence="1">5.4.2.10</ecNumber>
    </recommendedName>
</protein>
<reference key="1">
    <citation type="journal article" date="2009" name="Proc. Natl. Acad. Sci. U.S.A.">
        <title>Characterizing a model human gut microbiota composed of members of its two dominant bacterial phyla.</title>
        <authorList>
            <person name="Mahowald M.A."/>
            <person name="Rey F.E."/>
            <person name="Seedorf H."/>
            <person name="Turnbaugh P.J."/>
            <person name="Fulton R.S."/>
            <person name="Wollam A."/>
            <person name="Shah N."/>
            <person name="Wang C."/>
            <person name="Magrini V."/>
            <person name="Wilson R.K."/>
            <person name="Cantarel B.L."/>
            <person name="Coutinho P.M."/>
            <person name="Henrissat B."/>
            <person name="Crock L.W."/>
            <person name="Russell A."/>
            <person name="Verberkmoes N.C."/>
            <person name="Hettich R.L."/>
            <person name="Gordon J.I."/>
        </authorList>
    </citation>
    <scope>NUCLEOTIDE SEQUENCE [LARGE SCALE GENOMIC DNA]</scope>
    <source>
        <strain>ATCC 27750 / DSM 3376 / VPI C15-48 / C15-B4</strain>
    </source>
</reference>
<gene>
    <name evidence="1" type="primary">glmM</name>
    <name type="ordered locus">EUBELI_00152</name>
</gene>
<evidence type="ECO:0000255" key="1">
    <source>
        <dbReference type="HAMAP-Rule" id="MF_01554"/>
    </source>
</evidence>